<evidence type="ECO:0000255" key="1">
    <source>
        <dbReference type="HAMAP-Rule" id="MF_00298"/>
    </source>
</evidence>
<accession>Q1LSU2</accession>
<keyword id="KW-0378">Hydrolase</keyword>
<keyword id="KW-1185">Reference proteome</keyword>
<dbReference type="EC" id="3.6.1.-" evidence="1"/>
<dbReference type="EMBL" id="CP000238">
    <property type="protein sequence ID" value="ABF13947.1"/>
    <property type="molecule type" value="Genomic_DNA"/>
</dbReference>
<dbReference type="RefSeq" id="WP_011520705.1">
    <property type="nucleotide sequence ID" value="NC_007984.1"/>
</dbReference>
<dbReference type="SMR" id="Q1LSU2"/>
<dbReference type="STRING" id="374463.BCI_0542"/>
<dbReference type="KEGG" id="bci:BCI_0542"/>
<dbReference type="HOGENOM" id="CLU_087195_3_2_6"/>
<dbReference type="OrthoDB" id="9816040at2"/>
<dbReference type="Proteomes" id="UP000002427">
    <property type="component" value="Chromosome"/>
</dbReference>
<dbReference type="GO" id="GO:0005737">
    <property type="term" value="C:cytoplasm"/>
    <property type="evidence" value="ECO:0007669"/>
    <property type="project" value="TreeGrafter"/>
</dbReference>
<dbReference type="GO" id="GO:0034353">
    <property type="term" value="F:mRNA 5'-diphosphatase activity"/>
    <property type="evidence" value="ECO:0007669"/>
    <property type="project" value="TreeGrafter"/>
</dbReference>
<dbReference type="GO" id="GO:0006402">
    <property type="term" value="P:mRNA catabolic process"/>
    <property type="evidence" value="ECO:0007669"/>
    <property type="project" value="TreeGrafter"/>
</dbReference>
<dbReference type="CDD" id="cd03671">
    <property type="entry name" value="NUDIX_Ap4A_hydrolase_plant_like"/>
    <property type="match status" value="1"/>
</dbReference>
<dbReference type="FunFam" id="3.90.79.10:FF:000001">
    <property type="entry name" value="RNA pyrophosphohydrolase"/>
    <property type="match status" value="1"/>
</dbReference>
<dbReference type="Gene3D" id="3.90.79.10">
    <property type="entry name" value="Nucleoside Triphosphate Pyrophosphohydrolase"/>
    <property type="match status" value="1"/>
</dbReference>
<dbReference type="HAMAP" id="MF_00298">
    <property type="entry name" value="Nudix_RppH"/>
    <property type="match status" value="1"/>
</dbReference>
<dbReference type="InterPro" id="IPR020476">
    <property type="entry name" value="Nudix_hydrolase"/>
</dbReference>
<dbReference type="InterPro" id="IPR015797">
    <property type="entry name" value="NUDIX_hydrolase-like_dom_sf"/>
</dbReference>
<dbReference type="InterPro" id="IPR020084">
    <property type="entry name" value="NUDIX_hydrolase_CS"/>
</dbReference>
<dbReference type="InterPro" id="IPR000086">
    <property type="entry name" value="NUDIX_hydrolase_dom"/>
</dbReference>
<dbReference type="InterPro" id="IPR022927">
    <property type="entry name" value="RppH"/>
</dbReference>
<dbReference type="NCBIfam" id="NF001934">
    <property type="entry name" value="PRK00714.1-1"/>
    <property type="match status" value="1"/>
</dbReference>
<dbReference type="NCBIfam" id="NF001937">
    <property type="entry name" value="PRK00714.1-4"/>
    <property type="match status" value="1"/>
</dbReference>
<dbReference type="NCBIfam" id="NF001938">
    <property type="entry name" value="PRK00714.1-5"/>
    <property type="match status" value="1"/>
</dbReference>
<dbReference type="PANTHER" id="PTHR23114">
    <property type="entry name" value="M7GPPPN-MRNA HYDROLASE"/>
    <property type="match status" value="1"/>
</dbReference>
<dbReference type="PANTHER" id="PTHR23114:SF17">
    <property type="entry name" value="M7GPPPN-MRNA HYDROLASE"/>
    <property type="match status" value="1"/>
</dbReference>
<dbReference type="Pfam" id="PF00293">
    <property type="entry name" value="NUDIX"/>
    <property type="match status" value="1"/>
</dbReference>
<dbReference type="PRINTS" id="PR00502">
    <property type="entry name" value="NUDIXFAMILY"/>
</dbReference>
<dbReference type="SUPFAM" id="SSF55811">
    <property type="entry name" value="Nudix"/>
    <property type="match status" value="1"/>
</dbReference>
<dbReference type="PROSITE" id="PS51462">
    <property type="entry name" value="NUDIX"/>
    <property type="match status" value="1"/>
</dbReference>
<dbReference type="PROSITE" id="PS00893">
    <property type="entry name" value="NUDIX_BOX"/>
    <property type="match status" value="1"/>
</dbReference>
<reference key="1">
    <citation type="journal article" date="2006" name="PLoS Biol.">
        <title>Metabolic complementarity and genomics of the dual bacterial symbiosis of sharpshooters.</title>
        <authorList>
            <person name="Wu D."/>
            <person name="Daugherty S.C."/>
            <person name="Van Aken S.E."/>
            <person name="Pai G.H."/>
            <person name="Watkins K.L."/>
            <person name="Khouri H."/>
            <person name="Tallon L.J."/>
            <person name="Zaborsky J.M."/>
            <person name="Dunbar H.E."/>
            <person name="Tran P.L."/>
            <person name="Moran N.A."/>
            <person name="Eisen J.A."/>
        </authorList>
    </citation>
    <scope>NUCLEOTIDE SEQUENCE [LARGE SCALE GENOMIC DNA]</scope>
</reference>
<organism>
    <name type="scientific">Baumannia cicadellinicola subsp. Homalodisca coagulata</name>
    <dbReference type="NCBI Taxonomy" id="374463"/>
    <lineage>
        <taxon>Bacteria</taxon>
        <taxon>Pseudomonadati</taxon>
        <taxon>Pseudomonadota</taxon>
        <taxon>Gammaproteobacteria</taxon>
        <taxon>Candidatus Palibaumannia</taxon>
    </lineage>
</organism>
<protein>
    <recommendedName>
        <fullName evidence="1">RNA pyrophosphohydrolase</fullName>
        <ecNumber evidence="1">3.6.1.-</ecNumber>
    </recommendedName>
    <alternativeName>
        <fullName evidence="1">(Di)nucleoside polyphosphate hydrolase</fullName>
    </alternativeName>
</protein>
<feature type="chain" id="PRO_1000021928" description="RNA pyrophosphohydrolase">
    <location>
        <begin position="1"/>
        <end position="159"/>
    </location>
</feature>
<feature type="domain" description="Nudix hydrolase" evidence="1">
    <location>
        <begin position="6"/>
        <end position="149"/>
    </location>
</feature>
<feature type="short sequence motif" description="Nudix box">
    <location>
        <begin position="38"/>
        <end position="59"/>
    </location>
</feature>
<gene>
    <name evidence="1" type="primary">rppH</name>
    <name evidence="1" type="synonym">nudH</name>
    <name type="ordered locus">BCI_0542</name>
</gene>
<proteinExistence type="inferred from homology"/>
<name>RPPH_BAUCH</name>
<comment type="function">
    <text evidence="1">Accelerates the degradation of transcripts by removing pyrophosphate from the 5'-end of triphosphorylated RNA, leading to a more labile monophosphorylated state that can stimulate subsequent ribonuclease cleavage.</text>
</comment>
<comment type="cofactor">
    <cofactor evidence="1">
        <name>a divalent metal cation</name>
        <dbReference type="ChEBI" id="CHEBI:60240"/>
    </cofactor>
</comment>
<comment type="similarity">
    <text evidence="1">Belongs to the Nudix hydrolase family. RppH subfamily.</text>
</comment>
<sequence>MINEYGYRPNVGIVIGNFNGQVLWARRYKQNAWQFPQGGINSGETAEQAMFRELFEEVGLRPKDVRILTTTRYWLKYKIPHQFIRWDAKPICIGQKQKWFLLQLVCKDTRINIQCGKKPEFDSWKWVSFWYPLSQVVFFKRNVYRRMMKEFSRAIMLPE</sequence>